<evidence type="ECO:0000255" key="1">
    <source>
        <dbReference type="HAMAP-Rule" id="MF_01701"/>
    </source>
</evidence>
<evidence type="ECO:0000303" key="2">
    <source>
    </source>
</evidence>
<feature type="chain" id="PRO_0000092250" description="Sulfate/thiosulfate import ATP-binding protein CysA">
    <location>
        <begin position="1"/>
        <end position="357"/>
    </location>
</feature>
<feature type="domain" description="ABC transporter" evidence="1">
    <location>
        <begin position="3"/>
        <end position="237"/>
    </location>
</feature>
<feature type="binding site" evidence="1">
    <location>
        <begin position="35"/>
        <end position="42"/>
    </location>
    <ligand>
        <name>ATP</name>
        <dbReference type="ChEBI" id="CHEBI:30616"/>
    </ligand>
</feature>
<accession>O31339</accession>
<sequence>MSIQIQGVSKQYGTFQALTDIHLDIPKGELVALLGPSGSGKTTLLRIIAGLEEADEGSISFEGEDLTDIHVKNRQVGFVFQHYALFKHMNVFENVAFGLKVRKKSLRPSAEAIEEKVTELLKLVKMDGFAKRYPAQLSGGQRQRIALARALAVEPKILLLDEPFGALDAKVRKELRRWLRKLHDEFQITSVFVTHDQEEALDVADRIVVMNEGRIEQMGTPEEVYENPASPFVYDFLGNVNLFHGRVHKGKLNVGSVELEAPEHKHISNVDGVAYVRPHHLSISRTKQSVDAIPAKVSYSHAVGPVVYVELKRDGTDEYLEAEISKEQFRQLSIQAGDVVYVQPKEVKVFIPEDFVI</sequence>
<dbReference type="EC" id="7.3.2.3" evidence="1"/>
<dbReference type="EMBL" id="AE017194">
    <property type="protein sequence ID" value="AAS40129.1"/>
    <property type="molecule type" value="Genomic_DNA"/>
</dbReference>
<dbReference type="EMBL" id="Y10908">
    <property type="protein sequence ID" value="CAA71848.1"/>
    <property type="molecule type" value="Genomic_DNA"/>
</dbReference>
<dbReference type="SMR" id="O31339"/>
<dbReference type="KEGG" id="bca:BCE_1199"/>
<dbReference type="HOGENOM" id="CLU_000604_1_1_9"/>
<dbReference type="Proteomes" id="UP000002527">
    <property type="component" value="Chromosome"/>
</dbReference>
<dbReference type="GO" id="GO:0043190">
    <property type="term" value="C:ATP-binding cassette (ABC) transporter complex"/>
    <property type="evidence" value="ECO:0007669"/>
    <property type="project" value="InterPro"/>
</dbReference>
<dbReference type="GO" id="GO:0015419">
    <property type="term" value="F:ABC-type sulfate transporter activity"/>
    <property type="evidence" value="ECO:0007669"/>
    <property type="project" value="InterPro"/>
</dbReference>
<dbReference type="GO" id="GO:0102025">
    <property type="term" value="F:ABC-type thiosulfate transporter activity"/>
    <property type="evidence" value="ECO:0007669"/>
    <property type="project" value="RHEA"/>
</dbReference>
<dbReference type="GO" id="GO:0005524">
    <property type="term" value="F:ATP binding"/>
    <property type="evidence" value="ECO:0007669"/>
    <property type="project" value="UniProtKB-KW"/>
</dbReference>
<dbReference type="GO" id="GO:0016887">
    <property type="term" value="F:ATP hydrolysis activity"/>
    <property type="evidence" value="ECO:0007669"/>
    <property type="project" value="InterPro"/>
</dbReference>
<dbReference type="CDD" id="cd03296">
    <property type="entry name" value="ABC_CysA_sulfate_importer"/>
    <property type="match status" value="1"/>
</dbReference>
<dbReference type="FunFam" id="3.40.50.300:FF:000227">
    <property type="entry name" value="Sulfate/thiosulfate import ATP-binding protein CysA"/>
    <property type="match status" value="1"/>
</dbReference>
<dbReference type="Gene3D" id="3.40.50.300">
    <property type="entry name" value="P-loop containing nucleotide triphosphate hydrolases"/>
    <property type="match status" value="1"/>
</dbReference>
<dbReference type="InterPro" id="IPR003593">
    <property type="entry name" value="AAA+_ATPase"/>
</dbReference>
<dbReference type="InterPro" id="IPR050093">
    <property type="entry name" value="ABC_SmlMolc_Importer"/>
</dbReference>
<dbReference type="InterPro" id="IPR003439">
    <property type="entry name" value="ABC_transporter-like_ATP-bd"/>
</dbReference>
<dbReference type="InterPro" id="IPR017871">
    <property type="entry name" value="ABC_transporter-like_CS"/>
</dbReference>
<dbReference type="InterPro" id="IPR041193">
    <property type="entry name" value="CysA_C"/>
</dbReference>
<dbReference type="InterPro" id="IPR008995">
    <property type="entry name" value="Mo/tungstate-bd_C_term_dom"/>
</dbReference>
<dbReference type="InterPro" id="IPR027417">
    <property type="entry name" value="P-loop_NTPase"/>
</dbReference>
<dbReference type="InterPro" id="IPR005666">
    <property type="entry name" value="Sulph_transpt1"/>
</dbReference>
<dbReference type="InterPro" id="IPR024765">
    <property type="entry name" value="TOBE-like"/>
</dbReference>
<dbReference type="NCBIfam" id="TIGR00968">
    <property type="entry name" value="3a0106s01"/>
    <property type="match status" value="1"/>
</dbReference>
<dbReference type="PANTHER" id="PTHR42781">
    <property type="entry name" value="SPERMIDINE/PUTRESCINE IMPORT ATP-BINDING PROTEIN POTA"/>
    <property type="match status" value="1"/>
</dbReference>
<dbReference type="PANTHER" id="PTHR42781:SF4">
    <property type="entry name" value="SPERMIDINE_PUTRESCINE IMPORT ATP-BINDING PROTEIN POTA"/>
    <property type="match status" value="1"/>
</dbReference>
<dbReference type="Pfam" id="PF00005">
    <property type="entry name" value="ABC_tran"/>
    <property type="match status" value="1"/>
</dbReference>
<dbReference type="Pfam" id="PF17850">
    <property type="entry name" value="CysA_C_terminal"/>
    <property type="match status" value="1"/>
</dbReference>
<dbReference type="Pfam" id="PF12857">
    <property type="entry name" value="TOBE_3"/>
    <property type="match status" value="1"/>
</dbReference>
<dbReference type="SMART" id="SM00382">
    <property type="entry name" value="AAA"/>
    <property type="match status" value="1"/>
</dbReference>
<dbReference type="SUPFAM" id="SSF50331">
    <property type="entry name" value="MOP-like"/>
    <property type="match status" value="1"/>
</dbReference>
<dbReference type="SUPFAM" id="SSF52540">
    <property type="entry name" value="P-loop containing nucleoside triphosphate hydrolases"/>
    <property type="match status" value="1"/>
</dbReference>
<dbReference type="PROSITE" id="PS00211">
    <property type="entry name" value="ABC_TRANSPORTER_1"/>
    <property type="match status" value="1"/>
</dbReference>
<dbReference type="PROSITE" id="PS50893">
    <property type="entry name" value="ABC_TRANSPORTER_2"/>
    <property type="match status" value="1"/>
</dbReference>
<dbReference type="PROSITE" id="PS51237">
    <property type="entry name" value="CYSA"/>
    <property type="match status" value="1"/>
</dbReference>
<keyword id="KW-0067">ATP-binding</keyword>
<keyword id="KW-1003">Cell membrane</keyword>
<keyword id="KW-0472">Membrane</keyword>
<keyword id="KW-0547">Nucleotide-binding</keyword>
<keyword id="KW-0764">Sulfate transport</keyword>
<keyword id="KW-1278">Translocase</keyword>
<keyword id="KW-0813">Transport</keyword>
<organism>
    <name type="scientific">Bacillus cereus (strain ATCC 10987 / NRS 248)</name>
    <dbReference type="NCBI Taxonomy" id="222523"/>
    <lineage>
        <taxon>Bacteria</taxon>
        <taxon>Bacillati</taxon>
        <taxon>Bacillota</taxon>
        <taxon>Bacilli</taxon>
        <taxon>Bacillales</taxon>
        <taxon>Bacillaceae</taxon>
        <taxon>Bacillus</taxon>
        <taxon>Bacillus cereus group</taxon>
    </lineage>
</organism>
<comment type="function">
    <text evidence="1">Part of the ABC transporter complex CysAWTP involved in sulfate/thiosulfate import. Responsible for energy coupling to the transport system.</text>
</comment>
<comment type="catalytic activity">
    <reaction evidence="1">
        <text>sulfate(out) + ATP + H2O = sulfate(in) + ADP + phosphate + H(+)</text>
        <dbReference type="Rhea" id="RHEA:10192"/>
        <dbReference type="ChEBI" id="CHEBI:15377"/>
        <dbReference type="ChEBI" id="CHEBI:15378"/>
        <dbReference type="ChEBI" id="CHEBI:16189"/>
        <dbReference type="ChEBI" id="CHEBI:30616"/>
        <dbReference type="ChEBI" id="CHEBI:43474"/>
        <dbReference type="ChEBI" id="CHEBI:456216"/>
        <dbReference type="EC" id="7.3.2.3"/>
    </reaction>
</comment>
<comment type="catalytic activity">
    <reaction evidence="1">
        <text>thiosulfate(out) + ATP + H2O = thiosulfate(in) + ADP + phosphate + H(+)</text>
        <dbReference type="Rhea" id="RHEA:29871"/>
        <dbReference type="ChEBI" id="CHEBI:15377"/>
        <dbReference type="ChEBI" id="CHEBI:15378"/>
        <dbReference type="ChEBI" id="CHEBI:30616"/>
        <dbReference type="ChEBI" id="CHEBI:33542"/>
        <dbReference type="ChEBI" id="CHEBI:43474"/>
        <dbReference type="ChEBI" id="CHEBI:456216"/>
        <dbReference type="EC" id="7.3.2.3"/>
    </reaction>
</comment>
<comment type="subunit">
    <text evidence="1">The complex is composed of two ATP-binding proteins (CysA), two transmembrane proteins (CysT and CysW) and a solute-binding protein (CysP).</text>
</comment>
<comment type="subcellular location">
    <subcellularLocation>
        <location evidence="1">Cell membrane</location>
        <topology evidence="1">Peripheral membrane protein</topology>
    </subcellularLocation>
</comment>
<comment type="similarity">
    <text evidence="1">Belongs to the ABC transporter superfamily. Sulfate/tungstate importer (TC 3.A.1.6) family.</text>
</comment>
<name>CYSA_BACC1</name>
<gene>
    <name evidence="1 2" type="primary">cysA</name>
    <name type="ordered locus">BCE_1199</name>
</gene>
<reference key="1">
    <citation type="journal article" date="2004" name="Nucleic Acids Res.">
        <title>The genome sequence of Bacillus cereus ATCC 10987 reveals metabolic adaptations and a large plasmid related to Bacillus anthracis pXO1.</title>
        <authorList>
            <person name="Rasko D.A."/>
            <person name="Ravel J."/>
            <person name="Oekstad O.A."/>
            <person name="Helgason E."/>
            <person name="Cer R.Z."/>
            <person name="Jiang L."/>
            <person name="Shores K.A."/>
            <person name="Fouts D.E."/>
            <person name="Tourasse N.J."/>
            <person name="Angiuoli S.V."/>
            <person name="Kolonay J.F."/>
            <person name="Nelson W.C."/>
            <person name="Kolstoe A.-B."/>
            <person name="Fraser C.M."/>
            <person name="Read T.D."/>
        </authorList>
    </citation>
    <scope>NUCLEOTIDE SEQUENCE [LARGE SCALE GENOMIC DNA]</scope>
    <source>
        <strain>ATCC 10987 / NRS 248</strain>
    </source>
</reference>
<reference key="2">
    <citation type="journal article" date="1999" name="Microbiology">
        <title>Genome organization is not conserved between Bacillus cereus and Bacillus subtilis.</title>
        <authorList>
            <person name="Oekstad O.A."/>
            <person name="Hegna I.K."/>
            <person name="Lindbaeck T."/>
            <person name="Rishovd A.-L."/>
            <person name="Kolstoe A.-B."/>
        </authorList>
    </citation>
    <scope>NUCLEOTIDE SEQUENCE [GENOMIC DNA] OF 125-357</scope>
    <source>
        <strain>ATCC 10987 / NRS 248</strain>
    </source>
</reference>
<protein>
    <recommendedName>
        <fullName evidence="1">Sulfate/thiosulfate import ATP-binding protein CysA</fullName>
        <ecNumber evidence="1">7.3.2.3</ecNumber>
    </recommendedName>
    <alternativeName>
        <fullName evidence="1">Sulfate-transporting ATPase</fullName>
    </alternativeName>
</protein>
<proteinExistence type="inferred from homology"/>